<feature type="chain" id="PRO_1000003474" description="Small ribosomal subunit protein bS18">
    <location>
        <begin position="1"/>
        <end position="86"/>
    </location>
</feature>
<dbReference type="EMBL" id="CP000768">
    <property type="protein sequence ID" value="ABS43895.1"/>
    <property type="molecule type" value="Genomic_DNA"/>
</dbReference>
<dbReference type="SMR" id="A7H2T2"/>
<dbReference type="KEGG" id="cjd:JJD26997_0651"/>
<dbReference type="HOGENOM" id="CLU_148710_2_2_7"/>
<dbReference type="Proteomes" id="UP000002302">
    <property type="component" value="Chromosome"/>
</dbReference>
<dbReference type="GO" id="GO:0022627">
    <property type="term" value="C:cytosolic small ribosomal subunit"/>
    <property type="evidence" value="ECO:0007669"/>
    <property type="project" value="TreeGrafter"/>
</dbReference>
<dbReference type="GO" id="GO:0070181">
    <property type="term" value="F:small ribosomal subunit rRNA binding"/>
    <property type="evidence" value="ECO:0007669"/>
    <property type="project" value="TreeGrafter"/>
</dbReference>
<dbReference type="GO" id="GO:0003735">
    <property type="term" value="F:structural constituent of ribosome"/>
    <property type="evidence" value="ECO:0007669"/>
    <property type="project" value="InterPro"/>
</dbReference>
<dbReference type="GO" id="GO:0006412">
    <property type="term" value="P:translation"/>
    <property type="evidence" value="ECO:0007669"/>
    <property type="project" value="UniProtKB-UniRule"/>
</dbReference>
<dbReference type="FunFam" id="4.10.640.10:FF:000005">
    <property type="entry name" value="30S ribosomal protein S18"/>
    <property type="match status" value="1"/>
</dbReference>
<dbReference type="Gene3D" id="4.10.640.10">
    <property type="entry name" value="Ribosomal protein S18"/>
    <property type="match status" value="1"/>
</dbReference>
<dbReference type="HAMAP" id="MF_00270">
    <property type="entry name" value="Ribosomal_bS18"/>
    <property type="match status" value="1"/>
</dbReference>
<dbReference type="InterPro" id="IPR001648">
    <property type="entry name" value="Ribosomal_bS18"/>
</dbReference>
<dbReference type="InterPro" id="IPR036870">
    <property type="entry name" value="Ribosomal_bS18_sf"/>
</dbReference>
<dbReference type="NCBIfam" id="TIGR00165">
    <property type="entry name" value="S18"/>
    <property type="match status" value="1"/>
</dbReference>
<dbReference type="PANTHER" id="PTHR13479">
    <property type="entry name" value="30S RIBOSOMAL PROTEIN S18"/>
    <property type="match status" value="1"/>
</dbReference>
<dbReference type="PANTHER" id="PTHR13479:SF40">
    <property type="entry name" value="SMALL RIBOSOMAL SUBUNIT PROTEIN BS18M"/>
    <property type="match status" value="1"/>
</dbReference>
<dbReference type="Pfam" id="PF01084">
    <property type="entry name" value="Ribosomal_S18"/>
    <property type="match status" value="1"/>
</dbReference>
<dbReference type="PRINTS" id="PR00974">
    <property type="entry name" value="RIBOSOMALS18"/>
</dbReference>
<dbReference type="SUPFAM" id="SSF46911">
    <property type="entry name" value="Ribosomal protein S18"/>
    <property type="match status" value="1"/>
</dbReference>
<proteinExistence type="inferred from homology"/>
<evidence type="ECO:0000255" key="1">
    <source>
        <dbReference type="HAMAP-Rule" id="MF_00270"/>
    </source>
</evidence>
<evidence type="ECO:0000305" key="2"/>
<protein>
    <recommendedName>
        <fullName evidence="1">Small ribosomal subunit protein bS18</fullName>
    </recommendedName>
    <alternativeName>
        <fullName evidence="2">30S ribosomal protein S18</fullName>
    </alternativeName>
</protein>
<name>RS18_CAMJD</name>
<organism>
    <name type="scientific">Campylobacter jejuni subsp. doylei (strain ATCC BAA-1458 / RM4099 / 269.97)</name>
    <dbReference type="NCBI Taxonomy" id="360109"/>
    <lineage>
        <taxon>Bacteria</taxon>
        <taxon>Pseudomonadati</taxon>
        <taxon>Campylobacterota</taxon>
        <taxon>Epsilonproteobacteria</taxon>
        <taxon>Campylobacterales</taxon>
        <taxon>Campylobacteraceae</taxon>
        <taxon>Campylobacter</taxon>
    </lineage>
</organism>
<keyword id="KW-0687">Ribonucleoprotein</keyword>
<keyword id="KW-0689">Ribosomal protein</keyword>
<keyword id="KW-0694">RNA-binding</keyword>
<keyword id="KW-0699">rRNA-binding</keyword>
<reference key="1">
    <citation type="submission" date="2007-07" db="EMBL/GenBank/DDBJ databases">
        <title>Complete genome sequence of Campylobacter jejuni subsp doylei 269.97 isolated from human blood.</title>
        <authorList>
            <person name="Fouts D.E."/>
            <person name="Mongodin E.F."/>
            <person name="Puiu D."/>
            <person name="Sebastian Y."/>
            <person name="Miller W.G."/>
            <person name="Mandrell R.E."/>
            <person name="Lastovica A.J."/>
            <person name="Nelson K.E."/>
        </authorList>
    </citation>
    <scope>NUCLEOTIDE SEQUENCE [LARGE SCALE GENOMIC DNA]</scope>
    <source>
        <strain>ATCC BAA-1458 / RM4099 / 269.97</strain>
    </source>
</reference>
<accession>A7H2T2</accession>
<comment type="function">
    <text evidence="1">Binds as a heterodimer with protein bS6 to the central domain of the 16S rRNA, where it helps stabilize the platform of the 30S subunit.</text>
</comment>
<comment type="subunit">
    <text evidence="1">Part of the 30S ribosomal subunit. Forms a tight heterodimer with protein bS6.</text>
</comment>
<comment type="similarity">
    <text evidence="1">Belongs to the bacterial ribosomal protein bS18 family.</text>
</comment>
<gene>
    <name evidence="1" type="primary">rpsR</name>
    <name type="ordered locus">JJD26997_0651</name>
</gene>
<sequence length="86" mass="10271">MAEKRKYSRKYCKYTEAKVEFIDYKDTAMLKHALSERFKIMPRRLTGTSKKYQEMVEVAIKRARHVALIPYIVDRKEVINNPFEGL</sequence>